<reference key="1">
    <citation type="journal article" date="2006" name="Genome Res.">
        <title>Skewed genomic variability in strains of the toxigenic bacterial pathogen, Clostridium perfringens.</title>
        <authorList>
            <person name="Myers G.S.A."/>
            <person name="Rasko D.A."/>
            <person name="Cheung J.K."/>
            <person name="Ravel J."/>
            <person name="Seshadri R."/>
            <person name="DeBoy R.T."/>
            <person name="Ren Q."/>
            <person name="Varga J."/>
            <person name="Awad M.M."/>
            <person name="Brinkac L.M."/>
            <person name="Daugherty S.C."/>
            <person name="Haft D.H."/>
            <person name="Dodson R.J."/>
            <person name="Madupu R."/>
            <person name="Nelson W.C."/>
            <person name="Rosovitz M.J."/>
            <person name="Sullivan S.A."/>
            <person name="Khouri H."/>
            <person name="Dimitrov G.I."/>
            <person name="Watkins K.L."/>
            <person name="Mulligan S."/>
            <person name="Benton J."/>
            <person name="Radune D."/>
            <person name="Fisher D.J."/>
            <person name="Atkins H.S."/>
            <person name="Hiscox T."/>
            <person name="Jost B.H."/>
            <person name="Billington S.J."/>
            <person name="Songer J.G."/>
            <person name="McClane B.A."/>
            <person name="Titball R.W."/>
            <person name="Rood J.I."/>
            <person name="Melville S.B."/>
            <person name="Paulsen I.T."/>
        </authorList>
    </citation>
    <scope>NUCLEOTIDE SEQUENCE [LARGE SCALE GENOMIC DNA]</scope>
    <source>
        <strain>SM101 / Type A</strain>
    </source>
</reference>
<accession>Q0SQC8</accession>
<name>EFTU_CLOPS</name>
<feature type="chain" id="PRO_0000337365" description="Elongation factor Tu">
    <location>
        <begin position="1"/>
        <end position="397"/>
    </location>
</feature>
<feature type="domain" description="tr-type G">
    <location>
        <begin position="10"/>
        <end position="206"/>
    </location>
</feature>
<feature type="region of interest" description="G1" evidence="1">
    <location>
        <begin position="19"/>
        <end position="26"/>
    </location>
</feature>
<feature type="region of interest" description="G2" evidence="1">
    <location>
        <begin position="60"/>
        <end position="64"/>
    </location>
</feature>
<feature type="region of interest" description="G3" evidence="1">
    <location>
        <begin position="81"/>
        <end position="84"/>
    </location>
</feature>
<feature type="region of interest" description="G4" evidence="1">
    <location>
        <begin position="136"/>
        <end position="139"/>
    </location>
</feature>
<feature type="region of interest" description="G5" evidence="1">
    <location>
        <begin position="174"/>
        <end position="176"/>
    </location>
</feature>
<feature type="binding site" evidence="2">
    <location>
        <begin position="19"/>
        <end position="26"/>
    </location>
    <ligand>
        <name>GTP</name>
        <dbReference type="ChEBI" id="CHEBI:37565"/>
    </ligand>
</feature>
<feature type="binding site" evidence="2">
    <location>
        <position position="26"/>
    </location>
    <ligand>
        <name>Mg(2+)</name>
        <dbReference type="ChEBI" id="CHEBI:18420"/>
    </ligand>
</feature>
<feature type="binding site" evidence="2">
    <location>
        <begin position="81"/>
        <end position="85"/>
    </location>
    <ligand>
        <name>GTP</name>
        <dbReference type="ChEBI" id="CHEBI:37565"/>
    </ligand>
</feature>
<feature type="binding site" evidence="2">
    <location>
        <begin position="136"/>
        <end position="139"/>
    </location>
    <ligand>
        <name>GTP</name>
        <dbReference type="ChEBI" id="CHEBI:37565"/>
    </ligand>
</feature>
<dbReference type="EC" id="3.6.5.3" evidence="2"/>
<dbReference type="EMBL" id="CP000312">
    <property type="protein sequence ID" value="ABG86236.1"/>
    <property type="molecule type" value="Genomic_DNA"/>
</dbReference>
<dbReference type="EMBL" id="CP000312">
    <property type="protein sequence ID" value="ABG86432.1"/>
    <property type="molecule type" value="Genomic_DNA"/>
</dbReference>
<dbReference type="SMR" id="Q0SQC8"/>
<dbReference type="KEGG" id="cpr:CPR_2402"/>
<dbReference type="KEGG" id="cpr:CPR_2416"/>
<dbReference type="Proteomes" id="UP000001824">
    <property type="component" value="Chromosome"/>
</dbReference>
<dbReference type="GO" id="GO:0005829">
    <property type="term" value="C:cytosol"/>
    <property type="evidence" value="ECO:0007669"/>
    <property type="project" value="TreeGrafter"/>
</dbReference>
<dbReference type="GO" id="GO:0005525">
    <property type="term" value="F:GTP binding"/>
    <property type="evidence" value="ECO:0007669"/>
    <property type="project" value="UniProtKB-UniRule"/>
</dbReference>
<dbReference type="GO" id="GO:0003924">
    <property type="term" value="F:GTPase activity"/>
    <property type="evidence" value="ECO:0007669"/>
    <property type="project" value="InterPro"/>
</dbReference>
<dbReference type="GO" id="GO:0003746">
    <property type="term" value="F:translation elongation factor activity"/>
    <property type="evidence" value="ECO:0007669"/>
    <property type="project" value="UniProtKB-UniRule"/>
</dbReference>
<dbReference type="CDD" id="cd01884">
    <property type="entry name" value="EF_Tu"/>
    <property type="match status" value="1"/>
</dbReference>
<dbReference type="CDD" id="cd03697">
    <property type="entry name" value="EFTU_II"/>
    <property type="match status" value="1"/>
</dbReference>
<dbReference type="CDD" id="cd03707">
    <property type="entry name" value="EFTU_III"/>
    <property type="match status" value="1"/>
</dbReference>
<dbReference type="FunFam" id="2.40.30.10:FF:000001">
    <property type="entry name" value="Elongation factor Tu"/>
    <property type="match status" value="1"/>
</dbReference>
<dbReference type="FunFam" id="3.40.50.300:FF:000003">
    <property type="entry name" value="Elongation factor Tu"/>
    <property type="match status" value="1"/>
</dbReference>
<dbReference type="Gene3D" id="3.40.50.300">
    <property type="entry name" value="P-loop containing nucleotide triphosphate hydrolases"/>
    <property type="match status" value="1"/>
</dbReference>
<dbReference type="Gene3D" id="2.40.30.10">
    <property type="entry name" value="Translation factors"/>
    <property type="match status" value="2"/>
</dbReference>
<dbReference type="HAMAP" id="MF_00118_B">
    <property type="entry name" value="EF_Tu_B"/>
    <property type="match status" value="1"/>
</dbReference>
<dbReference type="InterPro" id="IPR041709">
    <property type="entry name" value="EF-Tu_GTP-bd"/>
</dbReference>
<dbReference type="InterPro" id="IPR050055">
    <property type="entry name" value="EF-Tu_GTPase"/>
</dbReference>
<dbReference type="InterPro" id="IPR004161">
    <property type="entry name" value="EFTu-like_2"/>
</dbReference>
<dbReference type="InterPro" id="IPR033720">
    <property type="entry name" value="EFTU_2"/>
</dbReference>
<dbReference type="InterPro" id="IPR031157">
    <property type="entry name" value="G_TR_CS"/>
</dbReference>
<dbReference type="InterPro" id="IPR027417">
    <property type="entry name" value="P-loop_NTPase"/>
</dbReference>
<dbReference type="InterPro" id="IPR005225">
    <property type="entry name" value="Small_GTP-bd"/>
</dbReference>
<dbReference type="InterPro" id="IPR000795">
    <property type="entry name" value="T_Tr_GTP-bd_dom"/>
</dbReference>
<dbReference type="InterPro" id="IPR009000">
    <property type="entry name" value="Transl_B-barrel_sf"/>
</dbReference>
<dbReference type="InterPro" id="IPR009001">
    <property type="entry name" value="Transl_elong_EF1A/Init_IF2_C"/>
</dbReference>
<dbReference type="InterPro" id="IPR004541">
    <property type="entry name" value="Transl_elong_EFTu/EF1A_bac/org"/>
</dbReference>
<dbReference type="InterPro" id="IPR004160">
    <property type="entry name" value="Transl_elong_EFTu/EF1A_C"/>
</dbReference>
<dbReference type="NCBIfam" id="TIGR00485">
    <property type="entry name" value="EF-Tu"/>
    <property type="match status" value="1"/>
</dbReference>
<dbReference type="NCBIfam" id="NF000766">
    <property type="entry name" value="PRK00049.1"/>
    <property type="match status" value="1"/>
</dbReference>
<dbReference type="NCBIfam" id="NF009372">
    <property type="entry name" value="PRK12735.1"/>
    <property type="match status" value="1"/>
</dbReference>
<dbReference type="NCBIfam" id="NF009373">
    <property type="entry name" value="PRK12736.1"/>
    <property type="match status" value="1"/>
</dbReference>
<dbReference type="NCBIfam" id="TIGR00231">
    <property type="entry name" value="small_GTP"/>
    <property type="match status" value="1"/>
</dbReference>
<dbReference type="PANTHER" id="PTHR43721:SF22">
    <property type="entry name" value="ELONGATION FACTOR TU, MITOCHONDRIAL"/>
    <property type="match status" value="1"/>
</dbReference>
<dbReference type="PANTHER" id="PTHR43721">
    <property type="entry name" value="ELONGATION FACTOR TU-RELATED"/>
    <property type="match status" value="1"/>
</dbReference>
<dbReference type="Pfam" id="PF00009">
    <property type="entry name" value="GTP_EFTU"/>
    <property type="match status" value="1"/>
</dbReference>
<dbReference type="Pfam" id="PF03144">
    <property type="entry name" value="GTP_EFTU_D2"/>
    <property type="match status" value="1"/>
</dbReference>
<dbReference type="Pfam" id="PF03143">
    <property type="entry name" value="GTP_EFTU_D3"/>
    <property type="match status" value="1"/>
</dbReference>
<dbReference type="PRINTS" id="PR00315">
    <property type="entry name" value="ELONGATNFCT"/>
</dbReference>
<dbReference type="SUPFAM" id="SSF50465">
    <property type="entry name" value="EF-Tu/eEF-1alpha/eIF2-gamma C-terminal domain"/>
    <property type="match status" value="1"/>
</dbReference>
<dbReference type="SUPFAM" id="SSF52540">
    <property type="entry name" value="P-loop containing nucleoside triphosphate hydrolases"/>
    <property type="match status" value="1"/>
</dbReference>
<dbReference type="SUPFAM" id="SSF50447">
    <property type="entry name" value="Translation proteins"/>
    <property type="match status" value="1"/>
</dbReference>
<dbReference type="PROSITE" id="PS00301">
    <property type="entry name" value="G_TR_1"/>
    <property type="match status" value="1"/>
</dbReference>
<dbReference type="PROSITE" id="PS51722">
    <property type="entry name" value="G_TR_2"/>
    <property type="match status" value="1"/>
</dbReference>
<protein>
    <recommendedName>
        <fullName evidence="2">Elongation factor Tu</fullName>
        <shortName evidence="2">EF-Tu</shortName>
        <ecNumber evidence="2">3.6.5.3</ecNumber>
    </recommendedName>
</protein>
<keyword id="KW-0963">Cytoplasm</keyword>
<keyword id="KW-0251">Elongation factor</keyword>
<keyword id="KW-0342">GTP-binding</keyword>
<keyword id="KW-0378">Hydrolase</keyword>
<keyword id="KW-0460">Magnesium</keyword>
<keyword id="KW-0479">Metal-binding</keyword>
<keyword id="KW-0547">Nucleotide-binding</keyword>
<keyword id="KW-0648">Protein biosynthesis</keyword>
<proteinExistence type="inferred from homology"/>
<sequence length="397" mass="43557">MSKAKFERSKPHVNIGTIGHVDHGKTTLTAAITTVLAQAGGAEAFKYDEIDKAPEEKERGITINTAHVEYETANRHYAHVDCPGHADYVKNMITGAAQMDGAILVCSAADGPMPQTREHILLSSRVGVDHIVVFLNKADMVDDEELLELVEMEVRELLSEYNFPGDDIPVIKGSALVALENPTDEAATACIRELMDAVDSYIPTPERATDKPFLMPVEDVFTITGRGTVATGRVERGVLHVGDEVEVIGLTEERRKTVVTGIEMFRKLLDEAQAGDNIGALLRGIQRTDIERGQVLAQVGTINPHKKFVGQVYVLKKEEGGRHTPFFDGYRPQFYFRTTDVTGSIKLPEGMEMVMPGDHIDMEVELITEIAMDEGLRFAIREGGRTVGSGVVTSIIE</sequence>
<evidence type="ECO:0000250" key="1"/>
<evidence type="ECO:0000255" key="2">
    <source>
        <dbReference type="HAMAP-Rule" id="MF_00118"/>
    </source>
</evidence>
<comment type="function">
    <text evidence="2">GTP hydrolase that promotes the GTP-dependent binding of aminoacyl-tRNA to the A-site of ribosomes during protein biosynthesis.</text>
</comment>
<comment type="catalytic activity">
    <reaction evidence="2">
        <text>GTP + H2O = GDP + phosphate + H(+)</text>
        <dbReference type="Rhea" id="RHEA:19669"/>
        <dbReference type="ChEBI" id="CHEBI:15377"/>
        <dbReference type="ChEBI" id="CHEBI:15378"/>
        <dbReference type="ChEBI" id="CHEBI:37565"/>
        <dbReference type="ChEBI" id="CHEBI:43474"/>
        <dbReference type="ChEBI" id="CHEBI:58189"/>
        <dbReference type="EC" id="3.6.5.3"/>
    </reaction>
    <physiologicalReaction direction="left-to-right" evidence="2">
        <dbReference type="Rhea" id="RHEA:19670"/>
    </physiologicalReaction>
</comment>
<comment type="subunit">
    <text evidence="2">Monomer.</text>
</comment>
<comment type="subcellular location">
    <subcellularLocation>
        <location evidence="2">Cytoplasm</location>
    </subcellularLocation>
</comment>
<comment type="similarity">
    <text evidence="2">Belongs to the TRAFAC class translation factor GTPase superfamily. Classic translation factor GTPase family. EF-Tu/EF-1A subfamily.</text>
</comment>
<gene>
    <name evidence="2" type="primary">tuf1</name>
    <name type="ordered locus">CPR_2402</name>
</gene>
<gene>
    <name evidence="2" type="primary">tuf2</name>
    <name type="ordered locus">CPR_2416</name>
</gene>
<organism>
    <name type="scientific">Clostridium perfringens (strain SM101 / Type A)</name>
    <dbReference type="NCBI Taxonomy" id="289380"/>
    <lineage>
        <taxon>Bacteria</taxon>
        <taxon>Bacillati</taxon>
        <taxon>Bacillota</taxon>
        <taxon>Clostridia</taxon>
        <taxon>Eubacteriales</taxon>
        <taxon>Clostridiaceae</taxon>
        <taxon>Clostridium</taxon>
    </lineage>
</organism>